<comment type="function">
    <text evidence="1">Catalyzes the conversion of 1-hydroxy-2-methyl-2-(E)-butenyl 4-diphosphate (HMBPP) into a mixture of isopentenyl diphosphate (IPP) and dimethylallyl diphosphate (DMAPP). Acts in the terminal step of the DOXP/MEP pathway for isoprenoid precursor biosynthesis.</text>
</comment>
<comment type="catalytic activity">
    <reaction evidence="1">
        <text>isopentenyl diphosphate + 2 oxidized [2Fe-2S]-[ferredoxin] + H2O = (2E)-4-hydroxy-3-methylbut-2-enyl diphosphate + 2 reduced [2Fe-2S]-[ferredoxin] + 2 H(+)</text>
        <dbReference type="Rhea" id="RHEA:24488"/>
        <dbReference type="Rhea" id="RHEA-COMP:10000"/>
        <dbReference type="Rhea" id="RHEA-COMP:10001"/>
        <dbReference type="ChEBI" id="CHEBI:15377"/>
        <dbReference type="ChEBI" id="CHEBI:15378"/>
        <dbReference type="ChEBI" id="CHEBI:33737"/>
        <dbReference type="ChEBI" id="CHEBI:33738"/>
        <dbReference type="ChEBI" id="CHEBI:128753"/>
        <dbReference type="ChEBI" id="CHEBI:128769"/>
        <dbReference type="EC" id="1.17.7.4"/>
    </reaction>
</comment>
<comment type="catalytic activity">
    <reaction evidence="1">
        <text>dimethylallyl diphosphate + 2 oxidized [2Fe-2S]-[ferredoxin] + H2O = (2E)-4-hydroxy-3-methylbut-2-enyl diphosphate + 2 reduced [2Fe-2S]-[ferredoxin] + 2 H(+)</text>
        <dbReference type="Rhea" id="RHEA:24825"/>
        <dbReference type="Rhea" id="RHEA-COMP:10000"/>
        <dbReference type="Rhea" id="RHEA-COMP:10001"/>
        <dbReference type="ChEBI" id="CHEBI:15377"/>
        <dbReference type="ChEBI" id="CHEBI:15378"/>
        <dbReference type="ChEBI" id="CHEBI:33737"/>
        <dbReference type="ChEBI" id="CHEBI:33738"/>
        <dbReference type="ChEBI" id="CHEBI:57623"/>
        <dbReference type="ChEBI" id="CHEBI:128753"/>
        <dbReference type="EC" id="1.17.7.4"/>
    </reaction>
</comment>
<comment type="cofactor">
    <cofactor evidence="1">
        <name>[4Fe-4S] cluster</name>
        <dbReference type="ChEBI" id="CHEBI:49883"/>
    </cofactor>
    <text evidence="1">Binds 1 [4Fe-4S] cluster per subunit.</text>
</comment>
<comment type="pathway">
    <text evidence="1">Isoprenoid biosynthesis; dimethylallyl diphosphate biosynthesis; dimethylallyl diphosphate from (2E)-4-hydroxy-3-methylbutenyl diphosphate: step 1/1.</text>
</comment>
<comment type="pathway">
    <text evidence="1">Isoprenoid biosynthesis; isopentenyl diphosphate biosynthesis via DXP pathway; isopentenyl diphosphate from 1-deoxy-D-xylulose 5-phosphate: step 6/6.</text>
</comment>
<comment type="subunit">
    <text evidence="1">Homodimer.</text>
</comment>
<comment type="similarity">
    <text evidence="1">Belongs to the IspH family.</text>
</comment>
<evidence type="ECO:0000255" key="1">
    <source>
        <dbReference type="HAMAP-Rule" id="MF_00191"/>
    </source>
</evidence>
<gene>
    <name evidence="1" type="primary">ispH</name>
    <name type="ordered locus">SeAg_B0055</name>
</gene>
<reference key="1">
    <citation type="journal article" date="2011" name="J. Bacteriol.">
        <title>Comparative genomics of 28 Salmonella enterica isolates: evidence for CRISPR-mediated adaptive sublineage evolution.</title>
        <authorList>
            <person name="Fricke W.F."/>
            <person name="Mammel M.K."/>
            <person name="McDermott P.F."/>
            <person name="Tartera C."/>
            <person name="White D.G."/>
            <person name="Leclerc J.E."/>
            <person name="Ravel J."/>
            <person name="Cebula T.A."/>
        </authorList>
    </citation>
    <scope>NUCLEOTIDE SEQUENCE [LARGE SCALE GENOMIC DNA]</scope>
    <source>
        <strain>SL483</strain>
    </source>
</reference>
<name>ISPH_SALA4</name>
<feature type="chain" id="PRO_1000098969" description="4-hydroxy-3-methylbut-2-enyl diphosphate reductase">
    <location>
        <begin position="1"/>
        <end position="316"/>
    </location>
</feature>
<feature type="active site" description="Proton donor" evidence="1">
    <location>
        <position position="126"/>
    </location>
</feature>
<feature type="binding site" evidence="1">
    <location>
        <position position="12"/>
    </location>
    <ligand>
        <name>[4Fe-4S] cluster</name>
        <dbReference type="ChEBI" id="CHEBI:49883"/>
    </ligand>
</feature>
<feature type="binding site" evidence="1">
    <location>
        <position position="41"/>
    </location>
    <ligand>
        <name>(2E)-4-hydroxy-3-methylbut-2-enyl diphosphate</name>
        <dbReference type="ChEBI" id="CHEBI:128753"/>
    </ligand>
</feature>
<feature type="binding site" evidence="1">
    <location>
        <position position="41"/>
    </location>
    <ligand>
        <name>dimethylallyl diphosphate</name>
        <dbReference type="ChEBI" id="CHEBI:57623"/>
    </ligand>
</feature>
<feature type="binding site" evidence="1">
    <location>
        <position position="41"/>
    </location>
    <ligand>
        <name>isopentenyl diphosphate</name>
        <dbReference type="ChEBI" id="CHEBI:128769"/>
    </ligand>
</feature>
<feature type="binding site" evidence="1">
    <location>
        <position position="74"/>
    </location>
    <ligand>
        <name>(2E)-4-hydroxy-3-methylbut-2-enyl diphosphate</name>
        <dbReference type="ChEBI" id="CHEBI:128753"/>
    </ligand>
</feature>
<feature type="binding site" evidence="1">
    <location>
        <position position="74"/>
    </location>
    <ligand>
        <name>dimethylallyl diphosphate</name>
        <dbReference type="ChEBI" id="CHEBI:57623"/>
    </ligand>
</feature>
<feature type="binding site" evidence="1">
    <location>
        <position position="74"/>
    </location>
    <ligand>
        <name>isopentenyl diphosphate</name>
        <dbReference type="ChEBI" id="CHEBI:128769"/>
    </ligand>
</feature>
<feature type="binding site" evidence="1">
    <location>
        <position position="96"/>
    </location>
    <ligand>
        <name>[4Fe-4S] cluster</name>
        <dbReference type="ChEBI" id="CHEBI:49883"/>
    </ligand>
</feature>
<feature type="binding site" evidence="1">
    <location>
        <position position="124"/>
    </location>
    <ligand>
        <name>(2E)-4-hydroxy-3-methylbut-2-enyl diphosphate</name>
        <dbReference type="ChEBI" id="CHEBI:128753"/>
    </ligand>
</feature>
<feature type="binding site" evidence="1">
    <location>
        <position position="124"/>
    </location>
    <ligand>
        <name>dimethylallyl diphosphate</name>
        <dbReference type="ChEBI" id="CHEBI:57623"/>
    </ligand>
</feature>
<feature type="binding site" evidence="1">
    <location>
        <position position="124"/>
    </location>
    <ligand>
        <name>isopentenyl diphosphate</name>
        <dbReference type="ChEBI" id="CHEBI:128769"/>
    </ligand>
</feature>
<feature type="binding site" evidence="1">
    <location>
        <position position="167"/>
    </location>
    <ligand>
        <name>(2E)-4-hydroxy-3-methylbut-2-enyl diphosphate</name>
        <dbReference type="ChEBI" id="CHEBI:128753"/>
    </ligand>
</feature>
<feature type="binding site" evidence="1">
    <location>
        <position position="197"/>
    </location>
    <ligand>
        <name>[4Fe-4S] cluster</name>
        <dbReference type="ChEBI" id="CHEBI:49883"/>
    </ligand>
</feature>
<feature type="binding site" evidence="1">
    <location>
        <position position="225"/>
    </location>
    <ligand>
        <name>(2E)-4-hydroxy-3-methylbut-2-enyl diphosphate</name>
        <dbReference type="ChEBI" id="CHEBI:128753"/>
    </ligand>
</feature>
<feature type="binding site" evidence="1">
    <location>
        <position position="225"/>
    </location>
    <ligand>
        <name>dimethylallyl diphosphate</name>
        <dbReference type="ChEBI" id="CHEBI:57623"/>
    </ligand>
</feature>
<feature type="binding site" evidence="1">
    <location>
        <position position="225"/>
    </location>
    <ligand>
        <name>isopentenyl diphosphate</name>
        <dbReference type="ChEBI" id="CHEBI:128769"/>
    </ligand>
</feature>
<feature type="binding site" evidence="1">
    <location>
        <position position="226"/>
    </location>
    <ligand>
        <name>(2E)-4-hydroxy-3-methylbut-2-enyl diphosphate</name>
        <dbReference type="ChEBI" id="CHEBI:128753"/>
    </ligand>
</feature>
<feature type="binding site" evidence="1">
    <location>
        <position position="226"/>
    </location>
    <ligand>
        <name>dimethylallyl diphosphate</name>
        <dbReference type="ChEBI" id="CHEBI:57623"/>
    </ligand>
</feature>
<feature type="binding site" evidence="1">
    <location>
        <position position="226"/>
    </location>
    <ligand>
        <name>isopentenyl diphosphate</name>
        <dbReference type="ChEBI" id="CHEBI:128769"/>
    </ligand>
</feature>
<feature type="binding site" evidence="1">
    <location>
        <position position="227"/>
    </location>
    <ligand>
        <name>(2E)-4-hydroxy-3-methylbut-2-enyl diphosphate</name>
        <dbReference type="ChEBI" id="CHEBI:128753"/>
    </ligand>
</feature>
<feature type="binding site" evidence="1">
    <location>
        <position position="227"/>
    </location>
    <ligand>
        <name>dimethylallyl diphosphate</name>
        <dbReference type="ChEBI" id="CHEBI:57623"/>
    </ligand>
</feature>
<feature type="binding site" evidence="1">
    <location>
        <position position="227"/>
    </location>
    <ligand>
        <name>isopentenyl diphosphate</name>
        <dbReference type="ChEBI" id="CHEBI:128769"/>
    </ligand>
</feature>
<feature type="binding site" evidence="1">
    <location>
        <position position="269"/>
    </location>
    <ligand>
        <name>(2E)-4-hydroxy-3-methylbut-2-enyl diphosphate</name>
        <dbReference type="ChEBI" id="CHEBI:128753"/>
    </ligand>
</feature>
<feature type="binding site" evidence="1">
    <location>
        <position position="269"/>
    </location>
    <ligand>
        <name>dimethylallyl diphosphate</name>
        <dbReference type="ChEBI" id="CHEBI:57623"/>
    </ligand>
</feature>
<feature type="binding site" evidence="1">
    <location>
        <position position="269"/>
    </location>
    <ligand>
        <name>isopentenyl diphosphate</name>
        <dbReference type="ChEBI" id="CHEBI:128769"/>
    </ligand>
</feature>
<sequence length="316" mass="34527">MQILLANPRGFCAGVDRAISIVENALAIYGAPIYVRHEVVHNRYVVDSLRQRGAIFIEQISEVPDGAILIFSAHGVSQAVRNEAKSRDLTVFDATCPLVTKVHMEVARASRRGEESILIGHAGHPEVEGTMGQYSNPEGGMYLVESPEDVWTLNVKNEGKLSFMTQTTLSVDDTSDVIDALRKRFPKIVGPRKDDICYATTNRQEAVRALAEQADVVLVVGSKNSSNSNRLAELAQRMGRTAFLIDDAADIQEAWVKEAACVGVTAGASAPDILVQNVIARLREFGGGEAVTLEGREENIVFEVPKELRVDVREVE</sequence>
<keyword id="KW-0004">4Fe-4S</keyword>
<keyword id="KW-0408">Iron</keyword>
<keyword id="KW-0411">Iron-sulfur</keyword>
<keyword id="KW-0414">Isoprene biosynthesis</keyword>
<keyword id="KW-0479">Metal-binding</keyword>
<keyword id="KW-0560">Oxidoreductase</keyword>
<organism>
    <name type="scientific">Salmonella agona (strain SL483)</name>
    <dbReference type="NCBI Taxonomy" id="454166"/>
    <lineage>
        <taxon>Bacteria</taxon>
        <taxon>Pseudomonadati</taxon>
        <taxon>Pseudomonadota</taxon>
        <taxon>Gammaproteobacteria</taxon>
        <taxon>Enterobacterales</taxon>
        <taxon>Enterobacteriaceae</taxon>
        <taxon>Salmonella</taxon>
    </lineage>
</organism>
<proteinExistence type="inferred from homology"/>
<accession>B5F728</accession>
<dbReference type="EC" id="1.17.7.4" evidence="1"/>
<dbReference type="EMBL" id="CP001138">
    <property type="protein sequence ID" value="ACH52122.1"/>
    <property type="molecule type" value="Genomic_DNA"/>
</dbReference>
<dbReference type="RefSeq" id="WP_001166428.1">
    <property type="nucleotide sequence ID" value="NC_011149.1"/>
</dbReference>
<dbReference type="SMR" id="B5F728"/>
<dbReference type="KEGG" id="sea:SeAg_B0055"/>
<dbReference type="HOGENOM" id="CLU_027486_1_0_6"/>
<dbReference type="UniPathway" id="UPA00056">
    <property type="reaction ID" value="UER00097"/>
</dbReference>
<dbReference type="UniPathway" id="UPA00059">
    <property type="reaction ID" value="UER00105"/>
</dbReference>
<dbReference type="Proteomes" id="UP000008819">
    <property type="component" value="Chromosome"/>
</dbReference>
<dbReference type="GO" id="GO:0051539">
    <property type="term" value="F:4 iron, 4 sulfur cluster binding"/>
    <property type="evidence" value="ECO:0007669"/>
    <property type="project" value="UniProtKB-UniRule"/>
</dbReference>
<dbReference type="GO" id="GO:0051745">
    <property type="term" value="F:4-hydroxy-3-methylbut-2-enyl diphosphate reductase activity"/>
    <property type="evidence" value="ECO:0007669"/>
    <property type="project" value="UniProtKB-UniRule"/>
</dbReference>
<dbReference type="GO" id="GO:0046872">
    <property type="term" value="F:metal ion binding"/>
    <property type="evidence" value="ECO:0007669"/>
    <property type="project" value="UniProtKB-KW"/>
</dbReference>
<dbReference type="GO" id="GO:0050992">
    <property type="term" value="P:dimethylallyl diphosphate biosynthetic process"/>
    <property type="evidence" value="ECO:0007669"/>
    <property type="project" value="UniProtKB-UniRule"/>
</dbReference>
<dbReference type="GO" id="GO:0019288">
    <property type="term" value="P:isopentenyl diphosphate biosynthetic process, methylerythritol 4-phosphate pathway"/>
    <property type="evidence" value="ECO:0007669"/>
    <property type="project" value="UniProtKB-UniRule"/>
</dbReference>
<dbReference type="GO" id="GO:0016114">
    <property type="term" value="P:terpenoid biosynthetic process"/>
    <property type="evidence" value="ECO:0007669"/>
    <property type="project" value="UniProtKB-UniRule"/>
</dbReference>
<dbReference type="CDD" id="cd13944">
    <property type="entry name" value="lytB_ispH"/>
    <property type="match status" value="1"/>
</dbReference>
<dbReference type="FunFam" id="3.40.1010.20:FF:000001">
    <property type="entry name" value="4-hydroxy-3-methylbut-2-enyl diphosphate reductase"/>
    <property type="match status" value="1"/>
</dbReference>
<dbReference type="FunFam" id="3.40.50.11270:FF:000001">
    <property type="entry name" value="4-hydroxy-3-methylbut-2-enyl diphosphate reductase"/>
    <property type="match status" value="1"/>
</dbReference>
<dbReference type="Gene3D" id="3.40.50.11270">
    <property type="match status" value="1"/>
</dbReference>
<dbReference type="Gene3D" id="3.40.1010.20">
    <property type="entry name" value="4-hydroxy-3-methylbut-2-enyl diphosphate reductase, catalytic domain"/>
    <property type="match status" value="2"/>
</dbReference>
<dbReference type="HAMAP" id="MF_00191">
    <property type="entry name" value="IspH"/>
    <property type="match status" value="1"/>
</dbReference>
<dbReference type="InterPro" id="IPR003451">
    <property type="entry name" value="LytB/IspH"/>
</dbReference>
<dbReference type="NCBIfam" id="TIGR00216">
    <property type="entry name" value="ispH_lytB"/>
    <property type="match status" value="1"/>
</dbReference>
<dbReference type="NCBIfam" id="NF002188">
    <property type="entry name" value="PRK01045.1-2"/>
    <property type="match status" value="1"/>
</dbReference>
<dbReference type="NCBIfam" id="NF002190">
    <property type="entry name" value="PRK01045.1-4"/>
    <property type="match status" value="1"/>
</dbReference>
<dbReference type="PANTHER" id="PTHR30426">
    <property type="entry name" value="4-HYDROXY-3-METHYLBUT-2-ENYL DIPHOSPHATE REDUCTASE"/>
    <property type="match status" value="1"/>
</dbReference>
<dbReference type="PANTHER" id="PTHR30426:SF0">
    <property type="entry name" value="4-HYDROXY-3-METHYLBUT-2-ENYL DIPHOSPHATE REDUCTASE"/>
    <property type="match status" value="1"/>
</dbReference>
<dbReference type="Pfam" id="PF02401">
    <property type="entry name" value="LYTB"/>
    <property type="match status" value="1"/>
</dbReference>
<protein>
    <recommendedName>
        <fullName evidence="1">4-hydroxy-3-methylbut-2-enyl diphosphate reductase</fullName>
        <shortName evidence="1">HMBPP reductase</shortName>
        <ecNumber evidence="1">1.17.7.4</ecNumber>
    </recommendedName>
</protein>